<proteinExistence type="inferred from homology"/>
<sequence>MTQTSAAPTTTPSFYEILNLPFPSTGLSKQQLKIAYHKALLKHHPDKAVAVAKENLPSSNHGPAQPPSNQKITIDAITTAYKTLSDPVQRAEYDRVLRLDRNRVNGAGDKNGNGTVFHTGLEVVDLEDLDCDEGGDEAMWYMACRCGDERGFSLSESDLEREADSGEIVVGCRGCSLYTKVLFAVQDD</sequence>
<name>DPH4_EMENI</name>
<reference key="1">
    <citation type="journal article" date="2005" name="Nature">
        <title>Sequencing of Aspergillus nidulans and comparative analysis with A. fumigatus and A. oryzae.</title>
        <authorList>
            <person name="Galagan J.E."/>
            <person name="Calvo S.E."/>
            <person name="Cuomo C."/>
            <person name="Ma L.-J."/>
            <person name="Wortman J.R."/>
            <person name="Batzoglou S."/>
            <person name="Lee S.-I."/>
            <person name="Bastuerkmen M."/>
            <person name="Spevak C.C."/>
            <person name="Clutterbuck J."/>
            <person name="Kapitonov V."/>
            <person name="Jurka J."/>
            <person name="Scazzocchio C."/>
            <person name="Farman M.L."/>
            <person name="Butler J."/>
            <person name="Purcell S."/>
            <person name="Harris S."/>
            <person name="Braus G.H."/>
            <person name="Draht O."/>
            <person name="Busch S."/>
            <person name="D'Enfert C."/>
            <person name="Bouchier C."/>
            <person name="Goldman G.H."/>
            <person name="Bell-Pedersen D."/>
            <person name="Griffiths-Jones S."/>
            <person name="Doonan J.H."/>
            <person name="Yu J."/>
            <person name="Vienken K."/>
            <person name="Pain A."/>
            <person name="Freitag M."/>
            <person name="Selker E.U."/>
            <person name="Archer D.B."/>
            <person name="Penalva M.A."/>
            <person name="Oakley B.R."/>
            <person name="Momany M."/>
            <person name="Tanaka T."/>
            <person name="Kumagai T."/>
            <person name="Asai K."/>
            <person name="Machida M."/>
            <person name="Nierman W.C."/>
            <person name="Denning D.W."/>
            <person name="Caddick M.X."/>
            <person name="Hynes M."/>
            <person name="Paoletti M."/>
            <person name="Fischer R."/>
            <person name="Miller B.L."/>
            <person name="Dyer P.S."/>
            <person name="Sachs M.S."/>
            <person name="Osmani S.A."/>
            <person name="Birren B.W."/>
        </authorList>
    </citation>
    <scope>NUCLEOTIDE SEQUENCE [LARGE SCALE GENOMIC DNA]</scope>
    <source>
        <strain>FGSC A4 / ATCC 38163 / CBS 112.46 / NRRL 194 / M139</strain>
    </source>
</reference>
<reference key="2">
    <citation type="journal article" date="2009" name="Fungal Genet. Biol.">
        <title>The 2008 update of the Aspergillus nidulans genome annotation: a community effort.</title>
        <authorList>
            <person name="Wortman J.R."/>
            <person name="Gilsenan J.M."/>
            <person name="Joardar V."/>
            <person name="Deegan J."/>
            <person name="Clutterbuck J."/>
            <person name="Andersen M.R."/>
            <person name="Archer D."/>
            <person name="Bencina M."/>
            <person name="Braus G."/>
            <person name="Coutinho P."/>
            <person name="von Dohren H."/>
            <person name="Doonan J."/>
            <person name="Driessen A.J."/>
            <person name="Durek P."/>
            <person name="Espeso E."/>
            <person name="Fekete E."/>
            <person name="Flipphi M."/>
            <person name="Estrada C.G."/>
            <person name="Geysens S."/>
            <person name="Goldman G."/>
            <person name="de Groot P.W."/>
            <person name="Hansen K."/>
            <person name="Harris S.D."/>
            <person name="Heinekamp T."/>
            <person name="Helmstaedt K."/>
            <person name="Henrissat B."/>
            <person name="Hofmann G."/>
            <person name="Homan T."/>
            <person name="Horio T."/>
            <person name="Horiuchi H."/>
            <person name="James S."/>
            <person name="Jones M."/>
            <person name="Karaffa L."/>
            <person name="Karanyi Z."/>
            <person name="Kato M."/>
            <person name="Keller N."/>
            <person name="Kelly D.E."/>
            <person name="Kiel J.A."/>
            <person name="Kim J.M."/>
            <person name="van der Klei I.J."/>
            <person name="Klis F.M."/>
            <person name="Kovalchuk A."/>
            <person name="Krasevec N."/>
            <person name="Kubicek C.P."/>
            <person name="Liu B."/>
            <person name="Maccabe A."/>
            <person name="Meyer V."/>
            <person name="Mirabito P."/>
            <person name="Miskei M."/>
            <person name="Mos M."/>
            <person name="Mullins J."/>
            <person name="Nelson D.R."/>
            <person name="Nielsen J."/>
            <person name="Oakley B.R."/>
            <person name="Osmani S.A."/>
            <person name="Pakula T."/>
            <person name="Paszewski A."/>
            <person name="Paulsen I."/>
            <person name="Pilsyk S."/>
            <person name="Pocsi I."/>
            <person name="Punt P.J."/>
            <person name="Ram A.F."/>
            <person name="Ren Q."/>
            <person name="Robellet X."/>
            <person name="Robson G."/>
            <person name="Seiboth B."/>
            <person name="van Solingen P."/>
            <person name="Specht T."/>
            <person name="Sun J."/>
            <person name="Taheri-Talesh N."/>
            <person name="Takeshita N."/>
            <person name="Ussery D."/>
            <person name="vanKuyk P.A."/>
            <person name="Visser H."/>
            <person name="van de Vondervoort P.J."/>
            <person name="de Vries R.P."/>
            <person name="Walton J."/>
            <person name="Xiang X."/>
            <person name="Xiong Y."/>
            <person name="Zeng A.P."/>
            <person name="Brandt B.W."/>
            <person name="Cornell M.J."/>
            <person name="van den Hondel C.A."/>
            <person name="Visser J."/>
            <person name="Oliver S.G."/>
            <person name="Turner G."/>
        </authorList>
    </citation>
    <scope>GENOME REANNOTATION</scope>
    <source>
        <strain>FGSC A4 / ATCC 38163 / CBS 112.46 / NRRL 194 / M139</strain>
    </source>
</reference>
<feature type="chain" id="PRO_0000071148" description="Diphthamide biosynthesis protein 4">
    <location>
        <begin position="1"/>
        <end position="188"/>
    </location>
</feature>
<feature type="domain" description="J" evidence="2">
    <location>
        <begin position="13"/>
        <end position="97"/>
    </location>
</feature>
<feature type="domain" description="DPH-type MB" evidence="3">
    <location>
        <begin position="120"/>
        <end position="184"/>
    </location>
</feature>
<feature type="binding site" evidence="3">
    <location>
        <position position="144"/>
    </location>
    <ligand>
        <name>Zn(2+)</name>
        <dbReference type="ChEBI" id="CHEBI:29105"/>
    </ligand>
</feature>
<feature type="binding site" evidence="3">
    <location>
        <position position="146"/>
    </location>
    <ligand>
        <name>Zn(2+)</name>
        <dbReference type="ChEBI" id="CHEBI:29105"/>
    </ligand>
</feature>
<feature type="binding site" evidence="3">
    <location>
        <position position="172"/>
    </location>
    <ligand>
        <name>Zn(2+)</name>
        <dbReference type="ChEBI" id="CHEBI:29105"/>
    </ligand>
</feature>
<feature type="binding site" evidence="3">
    <location>
        <position position="175"/>
    </location>
    <ligand>
        <name>Zn(2+)</name>
        <dbReference type="ChEBI" id="CHEBI:29105"/>
    </ligand>
</feature>
<dbReference type="EMBL" id="AACD01000026">
    <property type="protein sequence ID" value="EAA64750.1"/>
    <property type="status" value="ALT_SEQ"/>
    <property type="molecule type" value="Genomic_DNA"/>
</dbReference>
<dbReference type="EMBL" id="BN001307">
    <property type="protein sequence ID" value="CBF85256.1"/>
    <property type="molecule type" value="Genomic_DNA"/>
</dbReference>
<dbReference type="RefSeq" id="XP_659234.1">
    <property type="nucleotide sequence ID" value="XM_654142.1"/>
</dbReference>
<dbReference type="FunCoup" id="P0C0V5">
    <property type="interactions" value="353"/>
</dbReference>
<dbReference type="STRING" id="227321.P0C0V5"/>
<dbReference type="EnsemblFungi" id="CBF85256">
    <property type="protein sequence ID" value="CBF85256"/>
    <property type="gene ID" value="ANIA_10224"/>
</dbReference>
<dbReference type="VEuPathDB" id="FungiDB:AN10224"/>
<dbReference type="eggNOG" id="KOG0714">
    <property type="taxonomic scope" value="Eukaryota"/>
</dbReference>
<dbReference type="HOGENOM" id="CLU_036959_1_2_1"/>
<dbReference type="InParanoid" id="P0C0V5"/>
<dbReference type="OMA" id="IIGCRGC"/>
<dbReference type="OrthoDB" id="445556at2759"/>
<dbReference type="UniPathway" id="UPA00559"/>
<dbReference type="Proteomes" id="UP000000560">
    <property type="component" value="Chromosome VII"/>
</dbReference>
<dbReference type="GO" id="GO:0005737">
    <property type="term" value="C:cytoplasm"/>
    <property type="evidence" value="ECO:0007669"/>
    <property type="project" value="UniProtKB-SubCell"/>
</dbReference>
<dbReference type="GO" id="GO:0005634">
    <property type="term" value="C:nucleus"/>
    <property type="evidence" value="ECO:0007669"/>
    <property type="project" value="UniProtKB-SubCell"/>
</dbReference>
<dbReference type="GO" id="GO:0046872">
    <property type="term" value="F:metal ion binding"/>
    <property type="evidence" value="ECO:0007669"/>
    <property type="project" value="UniProtKB-KW"/>
</dbReference>
<dbReference type="GO" id="GO:0017183">
    <property type="term" value="P:protein histidyl modification to diphthamide"/>
    <property type="evidence" value="ECO:0007669"/>
    <property type="project" value="UniProtKB-UniPathway"/>
</dbReference>
<dbReference type="CDD" id="cd06257">
    <property type="entry name" value="DnaJ"/>
    <property type="match status" value="1"/>
</dbReference>
<dbReference type="FunFam" id="1.10.287.110:FF:000203">
    <property type="entry name" value="Diphthamide biosynthesis protein 4"/>
    <property type="match status" value="1"/>
</dbReference>
<dbReference type="Gene3D" id="1.10.287.110">
    <property type="entry name" value="DnaJ domain"/>
    <property type="match status" value="1"/>
</dbReference>
<dbReference type="Gene3D" id="3.10.660.10">
    <property type="entry name" value="DPH Zinc finger"/>
    <property type="match status" value="1"/>
</dbReference>
<dbReference type="InterPro" id="IPR001623">
    <property type="entry name" value="DnaJ_domain"/>
</dbReference>
<dbReference type="InterPro" id="IPR044248">
    <property type="entry name" value="DPH3/4-like"/>
</dbReference>
<dbReference type="InterPro" id="IPR007872">
    <property type="entry name" value="DPH_MB_dom"/>
</dbReference>
<dbReference type="InterPro" id="IPR036671">
    <property type="entry name" value="DPH_MB_sf"/>
</dbReference>
<dbReference type="InterPro" id="IPR036869">
    <property type="entry name" value="J_dom_sf"/>
</dbReference>
<dbReference type="PANTHER" id="PTHR21454:SF46">
    <property type="entry name" value="DIPHTHAMIDE BIOSYNTHESIS PROTEIN 4"/>
    <property type="match status" value="1"/>
</dbReference>
<dbReference type="PANTHER" id="PTHR21454">
    <property type="entry name" value="DPH3 HOMOLOG-RELATED"/>
    <property type="match status" value="1"/>
</dbReference>
<dbReference type="Pfam" id="PF00226">
    <property type="entry name" value="DnaJ"/>
    <property type="match status" value="1"/>
</dbReference>
<dbReference type="Pfam" id="PF05207">
    <property type="entry name" value="Zn_ribbon_CSL"/>
    <property type="match status" value="1"/>
</dbReference>
<dbReference type="SMART" id="SM00271">
    <property type="entry name" value="DnaJ"/>
    <property type="match status" value="1"/>
</dbReference>
<dbReference type="SUPFAM" id="SSF46565">
    <property type="entry name" value="Chaperone J-domain"/>
    <property type="match status" value="1"/>
</dbReference>
<dbReference type="SUPFAM" id="SSF144217">
    <property type="entry name" value="CSL zinc finger"/>
    <property type="match status" value="1"/>
</dbReference>
<dbReference type="PROSITE" id="PS50076">
    <property type="entry name" value="DNAJ_2"/>
    <property type="match status" value="1"/>
</dbReference>
<dbReference type="PROSITE" id="PS51074">
    <property type="entry name" value="DPH_MB"/>
    <property type="match status" value="1"/>
</dbReference>
<accession>P0C0V5</accession>
<accession>C8VNH6</accession>
<accession>Q5BCV0</accession>
<evidence type="ECO:0000250" key="1"/>
<evidence type="ECO:0000255" key="2">
    <source>
        <dbReference type="PROSITE-ProRule" id="PRU00286"/>
    </source>
</evidence>
<evidence type="ECO:0000255" key="3">
    <source>
        <dbReference type="PROSITE-ProRule" id="PRU00456"/>
    </source>
</evidence>
<evidence type="ECO:0000305" key="4"/>
<keyword id="KW-0963">Cytoplasm</keyword>
<keyword id="KW-0408">Iron</keyword>
<keyword id="KW-0479">Metal-binding</keyword>
<keyword id="KW-0539">Nucleus</keyword>
<keyword id="KW-1185">Reference proteome</keyword>
<keyword id="KW-0862">Zinc</keyword>
<gene>
    <name type="primary">dph4</name>
    <name type="ORF">AN10224</name>
</gene>
<protein>
    <recommendedName>
        <fullName>Diphthamide biosynthesis protein 4</fullName>
    </recommendedName>
</protein>
<comment type="function">
    <text evidence="1">Required for the first step of diphthamide biosynthesis, the transfer of 3-amino-3-carboxypropyl from S-adenosyl-L-methionine to a histidine residue. Diphthamide is a post-translational modification of histidine which occurs in elongation factor 2 (By similarity).</text>
</comment>
<comment type="pathway">
    <text>Protein modification; peptidyl-diphthamide biosynthesis.</text>
</comment>
<comment type="subcellular location">
    <subcellularLocation>
        <location evidence="1">Cytoplasm</location>
    </subcellularLocation>
    <subcellularLocation>
        <location evidence="1">Nucleus</location>
    </subcellularLocation>
</comment>
<comment type="domain">
    <text evidence="3">The DPH-type metal-binding (MB) domain can bind either zinc or iron ions.</text>
</comment>
<comment type="similarity">
    <text evidence="4">Belongs to the DPH4 family.</text>
</comment>
<comment type="sequence caution" evidence="4">
    <conflict type="erroneous gene model prediction">
        <sequence resource="EMBL-CDS" id="EAA64750"/>
    </conflict>
    <text>The predicted gene AN1630 has been split into 2 genes: AN10220 and AN10224.</text>
</comment>
<organism>
    <name type="scientific">Emericella nidulans (strain FGSC A4 / ATCC 38163 / CBS 112.46 / NRRL 194 / M139)</name>
    <name type="common">Aspergillus nidulans</name>
    <dbReference type="NCBI Taxonomy" id="227321"/>
    <lineage>
        <taxon>Eukaryota</taxon>
        <taxon>Fungi</taxon>
        <taxon>Dikarya</taxon>
        <taxon>Ascomycota</taxon>
        <taxon>Pezizomycotina</taxon>
        <taxon>Eurotiomycetes</taxon>
        <taxon>Eurotiomycetidae</taxon>
        <taxon>Eurotiales</taxon>
        <taxon>Aspergillaceae</taxon>
        <taxon>Aspergillus</taxon>
        <taxon>Aspergillus subgen. Nidulantes</taxon>
    </lineage>
</organism>